<comment type="similarity">
    <text evidence="1">Belongs to the PPR family. P subfamily.</text>
</comment>
<comment type="online information" name="Pentatricopeptide repeat proteins">
    <link uri="https://ppr.plantenergy.uwa.edu.au"/>
</comment>
<protein>
    <recommendedName>
        <fullName>Pentatricopeptide repeat-containing protein At2g16880</fullName>
    </recommendedName>
</protein>
<sequence>MATLKPPESQLLKTLTSILTSEKTHFLETLNPYIPQITQPLLTSLLSSPSLAKKPETLVSFFQWAQTSIPEAFPSDSPLPLISVVRSLLSHHKFADAKSLLVSYIRTSDASLSLCNSLLHPNLHLSPPPSKALFDIALSAYLHEGKPHVALQIFQKMIRLKLKPNLLTCNTLLIGLVRYPSSFSISSAREVFDDMVKIGVSLNVQTFNVLVNGYCLEGKLEDALGMLERMVSEFKVNPDNVTYNTILKAMSKKGRLSDLKELLLDMKKNGLVPNRVTYNNLVYGYCKLGSLKEAFQIVELMKQTNVLPDLCTYNILINGLCNAGSMREGLELMDAMKSLKLQPDVVTYNTLIDGCFELGLSLEARKLMEQMENDGVKANQVTHNISLKWLCKEEKREAVTRKVKELVDMHGFSPDIVTYHTLIKAYLKVGDLSGALEMMREMGQKGIKMNTITLNTILDALCKERKLDEAHNLLNSAHKRGFIVDEVTYGTLIMGFFREEKVEKALEMWDEMKKVKITPTVSTFNSLIGGLCHHGKTELAMEKFDELAESGLLPDDSTFNSIILGYCKEGRVEKAFEFYNESIKHSFKPDNYTCNILLNGLCKEGMTEKALNFFNTLIEEREVDTVTYNTMISAFCKDKKLKEAYDLLSEMEEKGLEPDRFTYNSFISLLMEDGKLSETDELLKKFSGKFGSMKRDLQVETEKNPATSESKEELNTEAIAYSDVIDELCSRGRLKEHSRSYTS</sequence>
<name>PP156_ARATH</name>
<feature type="chain" id="PRO_0000356016" description="Pentatricopeptide repeat-containing protein At2g16880">
    <location>
        <begin position="1"/>
        <end position="743"/>
    </location>
</feature>
<feature type="repeat" description="PPR 1">
    <location>
        <begin position="130"/>
        <end position="164"/>
    </location>
</feature>
<feature type="repeat" description="PPR 2">
    <location>
        <begin position="165"/>
        <end position="202"/>
    </location>
</feature>
<feature type="repeat" description="PPR 3">
    <location>
        <begin position="203"/>
        <end position="233"/>
    </location>
</feature>
<feature type="repeat" description="PPR 4">
    <location>
        <begin position="239"/>
        <end position="273"/>
    </location>
</feature>
<feature type="repeat" description="PPR 5">
    <location>
        <begin position="274"/>
        <end position="308"/>
    </location>
</feature>
<feature type="repeat" description="PPR 6">
    <location>
        <begin position="309"/>
        <end position="343"/>
    </location>
</feature>
<feature type="repeat" description="PPR 7">
    <location>
        <begin position="344"/>
        <end position="378"/>
    </location>
</feature>
<feature type="repeat" description="PPR 8">
    <location>
        <begin position="379"/>
        <end position="414"/>
    </location>
</feature>
<feature type="repeat" description="PPR 9">
    <location>
        <begin position="415"/>
        <end position="449"/>
    </location>
</feature>
<feature type="repeat" description="PPR 10">
    <location>
        <begin position="450"/>
        <end position="484"/>
    </location>
</feature>
<feature type="repeat" description="PPR 11">
    <location>
        <begin position="485"/>
        <end position="519"/>
    </location>
</feature>
<feature type="repeat" description="PPR 12">
    <location>
        <begin position="520"/>
        <end position="554"/>
    </location>
</feature>
<feature type="repeat" description="PPR 13">
    <location>
        <begin position="555"/>
        <end position="589"/>
    </location>
</feature>
<feature type="repeat" description="PPR 14">
    <location>
        <begin position="590"/>
        <end position="620"/>
    </location>
</feature>
<feature type="repeat" description="PPR 15">
    <location>
        <begin position="624"/>
        <end position="658"/>
    </location>
</feature>
<feature type="repeat" description="PPR 16">
    <location>
        <begin position="659"/>
        <end position="689"/>
    </location>
</feature>
<keyword id="KW-1185">Reference proteome</keyword>
<keyword id="KW-0677">Repeat</keyword>
<accession>Q9ZVX5</accession>
<organism>
    <name type="scientific">Arabidopsis thaliana</name>
    <name type="common">Mouse-ear cress</name>
    <dbReference type="NCBI Taxonomy" id="3702"/>
    <lineage>
        <taxon>Eukaryota</taxon>
        <taxon>Viridiplantae</taxon>
        <taxon>Streptophyta</taxon>
        <taxon>Embryophyta</taxon>
        <taxon>Tracheophyta</taxon>
        <taxon>Spermatophyta</taxon>
        <taxon>Magnoliopsida</taxon>
        <taxon>eudicotyledons</taxon>
        <taxon>Gunneridae</taxon>
        <taxon>Pentapetalae</taxon>
        <taxon>rosids</taxon>
        <taxon>malvids</taxon>
        <taxon>Brassicales</taxon>
        <taxon>Brassicaceae</taxon>
        <taxon>Camelineae</taxon>
        <taxon>Arabidopsis</taxon>
    </lineage>
</organism>
<proteinExistence type="evidence at transcript level"/>
<reference key="1">
    <citation type="journal article" date="1999" name="Nature">
        <title>Sequence and analysis of chromosome 2 of the plant Arabidopsis thaliana.</title>
        <authorList>
            <person name="Lin X."/>
            <person name="Kaul S."/>
            <person name="Rounsley S.D."/>
            <person name="Shea T.P."/>
            <person name="Benito M.-I."/>
            <person name="Town C.D."/>
            <person name="Fujii C.Y."/>
            <person name="Mason T.M."/>
            <person name="Bowman C.L."/>
            <person name="Barnstead M.E."/>
            <person name="Feldblyum T.V."/>
            <person name="Buell C.R."/>
            <person name="Ketchum K.A."/>
            <person name="Lee J.J."/>
            <person name="Ronning C.M."/>
            <person name="Koo H.L."/>
            <person name="Moffat K.S."/>
            <person name="Cronin L.A."/>
            <person name="Shen M."/>
            <person name="Pai G."/>
            <person name="Van Aken S."/>
            <person name="Umayam L."/>
            <person name="Tallon L.J."/>
            <person name="Gill J.E."/>
            <person name="Adams M.D."/>
            <person name="Carrera A.J."/>
            <person name="Creasy T.H."/>
            <person name="Goodman H.M."/>
            <person name="Somerville C.R."/>
            <person name="Copenhaver G.P."/>
            <person name="Preuss D."/>
            <person name="Nierman W.C."/>
            <person name="White O."/>
            <person name="Eisen J.A."/>
            <person name="Salzberg S.L."/>
            <person name="Fraser C.M."/>
            <person name="Venter J.C."/>
        </authorList>
    </citation>
    <scope>NUCLEOTIDE SEQUENCE [LARGE SCALE GENOMIC DNA]</scope>
    <source>
        <strain>cv. Columbia</strain>
    </source>
</reference>
<reference key="2">
    <citation type="journal article" date="2017" name="Plant J.">
        <title>Araport11: a complete reannotation of the Arabidopsis thaliana reference genome.</title>
        <authorList>
            <person name="Cheng C.Y."/>
            <person name="Krishnakumar V."/>
            <person name="Chan A.P."/>
            <person name="Thibaud-Nissen F."/>
            <person name="Schobel S."/>
            <person name="Town C.D."/>
        </authorList>
    </citation>
    <scope>GENOME REANNOTATION</scope>
    <source>
        <strain>cv. Columbia</strain>
    </source>
</reference>
<reference key="3">
    <citation type="journal article" date="2003" name="Science">
        <title>Empirical analysis of transcriptional activity in the Arabidopsis genome.</title>
        <authorList>
            <person name="Yamada K."/>
            <person name="Lim J."/>
            <person name="Dale J.M."/>
            <person name="Chen H."/>
            <person name="Shinn P."/>
            <person name="Palm C.J."/>
            <person name="Southwick A.M."/>
            <person name="Wu H.C."/>
            <person name="Kim C.J."/>
            <person name="Nguyen M."/>
            <person name="Pham P.K."/>
            <person name="Cheuk R.F."/>
            <person name="Karlin-Newmann G."/>
            <person name="Liu S.X."/>
            <person name="Lam B."/>
            <person name="Sakano H."/>
            <person name="Wu T."/>
            <person name="Yu G."/>
            <person name="Miranda M."/>
            <person name="Quach H.L."/>
            <person name="Tripp M."/>
            <person name="Chang C.H."/>
            <person name="Lee J.M."/>
            <person name="Toriumi M.J."/>
            <person name="Chan M.M."/>
            <person name="Tang C.C."/>
            <person name="Onodera C.S."/>
            <person name="Deng J.M."/>
            <person name="Akiyama K."/>
            <person name="Ansari Y."/>
            <person name="Arakawa T."/>
            <person name="Banh J."/>
            <person name="Banno F."/>
            <person name="Bowser L."/>
            <person name="Brooks S.Y."/>
            <person name="Carninci P."/>
            <person name="Chao Q."/>
            <person name="Choy N."/>
            <person name="Enju A."/>
            <person name="Goldsmith A.D."/>
            <person name="Gurjal M."/>
            <person name="Hansen N.F."/>
            <person name="Hayashizaki Y."/>
            <person name="Johnson-Hopson C."/>
            <person name="Hsuan V.W."/>
            <person name="Iida K."/>
            <person name="Karnes M."/>
            <person name="Khan S."/>
            <person name="Koesema E."/>
            <person name="Ishida J."/>
            <person name="Jiang P.X."/>
            <person name="Jones T."/>
            <person name="Kawai J."/>
            <person name="Kamiya A."/>
            <person name="Meyers C."/>
            <person name="Nakajima M."/>
            <person name="Narusaka M."/>
            <person name="Seki M."/>
            <person name="Sakurai T."/>
            <person name="Satou M."/>
            <person name="Tamse R."/>
            <person name="Vaysberg M."/>
            <person name="Wallender E.K."/>
            <person name="Wong C."/>
            <person name="Yamamura Y."/>
            <person name="Yuan S."/>
            <person name="Shinozaki K."/>
            <person name="Davis R.W."/>
            <person name="Theologis A."/>
            <person name="Ecker J.R."/>
        </authorList>
    </citation>
    <scope>NUCLEOTIDE SEQUENCE [LARGE SCALE MRNA]</scope>
    <source>
        <strain>cv. Columbia</strain>
    </source>
</reference>
<reference key="4">
    <citation type="journal article" date="2004" name="Plant Cell">
        <title>Genome-wide analysis of Arabidopsis pentatricopeptide repeat proteins reveals their essential role in organelle biogenesis.</title>
        <authorList>
            <person name="Lurin C."/>
            <person name="Andres C."/>
            <person name="Aubourg S."/>
            <person name="Bellaoui M."/>
            <person name="Bitton F."/>
            <person name="Bruyere C."/>
            <person name="Caboche M."/>
            <person name="Debast C."/>
            <person name="Gualberto J."/>
            <person name="Hoffmann B."/>
            <person name="Lecharny A."/>
            <person name="Le Ret M."/>
            <person name="Martin-Magniette M.-L."/>
            <person name="Mireau H."/>
            <person name="Peeters N."/>
            <person name="Renou J.-P."/>
            <person name="Szurek B."/>
            <person name="Taconnat L."/>
            <person name="Small I."/>
        </authorList>
    </citation>
    <scope>GENE FAMILY</scope>
</reference>
<gene>
    <name type="ordered locus">At2g16880</name>
    <name type="ORF">F12A24.6</name>
</gene>
<evidence type="ECO:0000305" key="1"/>
<dbReference type="EMBL" id="AC005167">
    <property type="protein sequence ID" value="AAC64219.1"/>
    <property type="molecule type" value="Genomic_DNA"/>
</dbReference>
<dbReference type="EMBL" id="CP002685">
    <property type="protein sequence ID" value="AEC06546.1"/>
    <property type="molecule type" value="Genomic_DNA"/>
</dbReference>
<dbReference type="EMBL" id="AY072079">
    <property type="protein sequence ID" value="AAL59902.1"/>
    <property type="molecule type" value="mRNA"/>
</dbReference>
<dbReference type="EMBL" id="AY096663">
    <property type="protein sequence ID" value="AAM20297.1"/>
    <property type="molecule type" value="mRNA"/>
</dbReference>
<dbReference type="PIR" id="D84545">
    <property type="entry name" value="D84545"/>
</dbReference>
<dbReference type="RefSeq" id="NP_179280.1">
    <property type="nucleotide sequence ID" value="NM_127241.5"/>
</dbReference>
<dbReference type="SMR" id="Q9ZVX5"/>
<dbReference type="BioGRID" id="1546">
    <property type="interactions" value="1"/>
</dbReference>
<dbReference type="FunCoup" id="Q9ZVX5">
    <property type="interactions" value="649"/>
</dbReference>
<dbReference type="IntAct" id="Q9ZVX5">
    <property type="interactions" value="1"/>
</dbReference>
<dbReference type="STRING" id="3702.Q9ZVX5"/>
<dbReference type="GlyGen" id="Q9ZVX5">
    <property type="glycosylation" value="1 site"/>
</dbReference>
<dbReference type="PaxDb" id="3702-AT2G16880.1"/>
<dbReference type="ProteomicsDB" id="249421"/>
<dbReference type="EnsemblPlants" id="AT2G16880.1">
    <property type="protein sequence ID" value="AT2G16880.1"/>
    <property type="gene ID" value="AT2G16880"/>
</dbReference>
<dbReference type="GeneID" id="816189"/>
<dbReference type="Gramene" id="AT2G16880.1">
    <property type="protein sequence ID" value="AT2G16880.1"/>
    <property type="gene ID" value="AT2G16880"/>
</dbReference>
<dbReference type="KEGG" id="ath:AT2G16880"/>
<dbReference type="Araport" id="AT2G16880"/>
<dbReference type="TAIR" id="AT2G16880"/>
<dbReference type="eggNOG" id="KOG4197">
    <property type="taxonomic scope" value="Eukaryota"/>
</dbReference>
<dbReference type="HOGENOM" id="CLU_002706_49_12_1"/>
<dbReference type="InParanoid" id="Q9ZVX5"/>
<dbReference type="OMA" id="SEEAHNM"/>
<dbReference type="PhylomeDB" id="Q9ZVX5"/>
<dbReference type="PRO" id="PR:Q9ZVX5"/>
<dbReference type="Proteomes" id="UP000006548">
    <property type="component" value="Chromosome 2"/>
</dbReference>
<dbReference type="ExpressionAtlas" id="Q9ZVX5">
    <property type="expression patterns" value="baseline and differential"/>
</dbReference>
<dbReference type="GO" id="GO:0003729">
    <property type="term" value="F:mRNA binding"/>
    <property type="evidence" value="ECO:0000314"/>
    <property type="project" value="TAIR"/>
</dbReference>
<dbReference type="Gene3D" id="1.25.40.10">
    <property type="entry name" value="Tetratricopeptide repeat domain"/>
    <property type="match status" value="5"/>
</dbReference>
<dbReference type="InterPro" id="IPR002885">
    <property type="entry name" value="Pentatricopeptide_rpt"/>
</dbReference>
<dbReference type="InterPro" id="IPR011990">
    <property type="entry name" value="TPR-like_helical_dom_sf"/>
</dbReference>
<dbReference type="NCBIfam" id="TIGR00756">
    <property type="entry name" value="PPR"/>
    <property type="match status" value="13"/>
</dbReference>
<dbReference type="PANTHER" id="PTHR47447">
    <property type="entry name" value="OS03G0856100 PROTEIN"/>
    <property type="match status" value="1"/>
</dbReference>
<dbReference type="PANTHER" id="PTHR47447:SF22">
    <property type="entry name" value="TETRATRICOPEPTIDE-LIKE HELICAL DOMAIN SUPERFAMILY"/>
    <property type="match status" value="1"/>
</dbReference>
<dbReference type="Pfam" id="PF12854">
    <property type="entry name" value="PPR_1"/>
    <property type="match status" value="1"/>
</dbReference>
<dbReference type="Pfam" id="PF13041">
    <property type="entry name" value="PPR_2"/>
    <property type="match status" value="6"/>
</dbReference>
<dbReference type="Pfam" id="PF13812">
    <property type="entry name" value="PPR_3"/>
    <property type="match status" value="1"/>
</dbReference>
<dbReference type="SUPFAM" id="SSF81901">
    <property type="entry name" value="HCP-like"/>
    <property type="match status" value="1"/>
</dbReference>
<dbReference type="SUPFAM" id="SSF48452">
    <property type="entry name" value="TPR-like"/>
    <property type="match status" value="1"/>
</dbReference>
<dbReference type="PROSITE" id="PS51375">
    <property type="entry name" value="PPR"/>
    <property type="match status" value="17"/>
</dbReference>